<reference key="1">
    <citation type="journal article" date="2005" name="Genome Res.">
        <title>Living with two extremes: conclusions from the genome sequence of Natronomonas pharaonis.</title>
        <authorList>
            <person name="Falb M."/>
            <person name="Pfeiffer F."/>
            <person name="Palm P."/>
            <person name="Rodewald K."/>
            <person name="Hickmann V."/>
            <person name="Tittor J."/>
            <person name="Oesterhelt D."/>
        </authorList>
    </citation>
    <scope>NUCLEOTIDE SEQUENCE [LARGE SCALE GENOMIC DNA]</scope>
    <source>
        <strain>ATCC 35678 / DSM 2160 / CIP 103997 / JCM 8858 / NBRC 14720 / NCIMB 2260 / Gabara</strain>
    </source>
</reference>
<sequence length="474" mass="51242">MSEGTLYDKVWENHKVTTLPNGQDQLFVGLHLIHEVTSPQAFGMLRERDIEVARPDLTHATVDHIVPTADQSRPLDNEAAEEMMAELEENVREAGITLDDPTTGNQGIVHVIGPEQGLTQPGKTIVCGDSHTSTHGAFGALAFGIGTSQIRDVLATQTIAMEKKDVRKIEVTGELGEGVTAKDIILTIIRRLGTDGGVGYVYEYAGEAIENLGMEGRMSICNMSIEGGARAGYVNPDETTYEWLRETDAFADDPERFEELKPYWESVRSDPDAEYDDVVTIDGSEIEPVVTWGTTPGQGIGITEEIPAPEDLPADKQDTARRAQDHMGVEPGETMAGYNIDVAFLGSCTNARLPDLRSAAEIIKGREVHDSVRAMVVPGSQRVKAAAEDEGLDSVFKEAGFDWREAGCSMCLGMNDDQLVGDEACASSSNRNFVGRQGSKDGRTVLMSPEMVAAAAVTGEVTDVRELPKAEVEA</sequence>
<protein>
    <recommendedName>
        <fullName evidence="1">3-isopropylmalate dehydratase large subunit</fullName>
        <ecNumber evidence="1">4.2.1.33</ecNumber>
    </recommendedName>
    <alternativeName>
        <fullName evidence="1">Alpha-IPM isomerase</fullName>
        <shortName evidence="1">IPMI</shortName>
    </alternativeName>
    <alternativeName>
        <fullName evidence="1">Isopropylmalate isomerase</fullName>
    </alternativeName>
</protein>
<comment type="function">
    <text evidence="1">Catalyzes the isomerization between 2-isopropylmalate and 3-isopropylmalate, via the formation of 2-isopropylmaleate.</text>
</comment>
<comment type="catalytic activity">
    <reaction evidence="1">
        <text>(2R,3S)-3-isopropylmalate = (2S)-2-isopropylmalate</text>
        <dbReference type="Rhea" id="RHEA:32287"/>
        <dbReference type="ChEBI" id="CHEBI:1178"/>
        <dbReference type="ChEBI" id="CHEBI:35121"/>
        <dbReference type="EC" id="4.2.1.33"/>
    </reaction>
</comment>
<comment type="cofactor">
    <cofactor evidence="1">
        <name>[4Fe-4S] cluster</name>
        <dbReference type="ChEBI" id="CHEBI:49883"/>
    </cofactor>
    <text evidence="1">Binds 1 [4Fe-4S] cluster per subunit.</text>
</comment>
<comment type="pathway">
    <text evidence="1">Amino-acid biosynthesis; L-leucine biosynthesis; L-leucine from 3-methyl-2-oxobutanoate: step 2/4.</text>
</comment>
<comment type="subunit">
    <text evidence="1">Heterodimer of LeuC and LeuD.</text>
</comment>
<comment type="similarity">
    <text evidence="1">Belongs to the aconitase/IPM isomerase family. LeuC type 1 subfamily.</text>
</comment>
<dbReference type="EC" id="4.2.1.33" evidence="1"/>
<dbReference type="EMBL" id="CR936257">
    <property type="protein sequence ID" value="CAI49188.1"/>
    <property type="molecule type" value="Genomic_DNA"/>
</dbReference>
<dbReference type="RefSeq" id="WP_011322816.1">
    <property type="nucleotide sequence ID" value="NC_007426.1"/>
</dbReference>
<dbReference type="SMR" id="Q3IRQ4"/>
<dbReference type="STRING" id="348780.NP_2194A"/>
<dbReference type="EnsemblBacteria" id="CAI49188">
    <property type="protein sequence ID" value="CAI49188"/>
    <property type="gene ID" value="NP_2194A"/>
</dbReference>
<dbReference type="GeneID" id="3702880"/>
<dbReference type="KEGG" id="nph:NP_2194A"/>
<dbReference type="eggNOG" id="arCOG01698">
    <property type="taxonomic scope" value="Archaea"/>
</dbReference>
<dbReference type="HOGENOM" id="CLU_006714_3_4_2"/>
<dbReference type="OrthoDB" id="6900at2157"/>
<dbReference type="UniPathway" id="UPA00048">
    <property type="reaction ID" value="UER00071"/>
</dbReference>
<dbReference type="Proteomes" id="UP000002698">
    <property type="component" value="Chromosome"/>
</dbReference>
<dbReference type="GO" id="GO:0003861">
    <property type="term" value="F:3-isopropylmalate dehydratase activity"/>
    <property type="evidence" value="ECO:0007669"/>
    <property type="project" value="UniProtKB-UniRule"/>
</dbReference>
<dbReference type="GO" id="GO:0051539">
    <property type="term" value="F:4 iron, 4 sulfur cluster binding"/>
    <property type="evidence" value="ECO:0007669"/>
    <property type="project" value="UniProtKB-KW"/>
</dbReference>
<dbReference type="GO" id="GO:0046872">
    <property type="term" value="F:metal ion binding"/>
    <property type="evidence" value="ECO:0007669"/>
    <property type="project" value="UniProtKB-KW"/>
</dbReference>
<dbReference type="GO" id="GO:0009098">
    <property type="term" value="P:L-leucine biosynthetic process"/>
    <property type="evidence" value="ECO:0007669"/>
    <property type="project" value="UniProtKB-UniRule"/>
</dbReference>
<dbReference type="CDD" id="cd01583">
    <property type="entry name" value="IPMI"/>
    <property type="match status" value="1"/>
</dbReference>
<dbReference type="Gene3D" id="3.30.499.10">
    <property type="entry name" value="Aconitase, domain 3"/>
    <property type="match status" value="2"/>
</dbReference>
<dbReference type="HAMAP" id="MF_01026">
    <property type="entry name" value="LeuC_type1"/>
    <property type="match status" value="1"/>
</dbReference>
<dbReference type="InterPro" id="IPR004430">
    <property type="entry name" value="3-IsopropMal_deHydase_lsu"/>
</dbReference>
<dbReference type="InterPro" id="IPR015931">
    <property type="entry name" value="Acnase/IPM_dHydase_lsu_aba_1/3"/>
</dbReference>
<dbReference type="InterPro" id="IPR001030">
    <property type="entry name" value="Acoase/IPM_deHydtase_lsu_aba"/>
</dbReference>
<dbReference type="InterPro" id="IPR018136">
    <property type="entry name" value="Aconitase_4Fe-4S_BS"/>
</dbReference>
<dbReference type="InterPro" id="IPR036008">
    <property type="entry name" value="Aconitase_4Fe-4S_dom"/>
</dbReference>
<dbReference type="InterPro" id="IPR050067">
    <property type="entry name" value="IPM_dehydratase_rel_enz"/>
</dbReference>
<dbReference type="InterPro" id="IPR033941">
    <property type="entry name" value="IPMI_cat"/>
</dbReference>
<dbReference type="NCBIfam" id="TIGR00170">
    <property type="entry name" value="leuC"/>
    <property type="match status" value="1"/>
</dbReference>
<dbReference type="NCBIfam" id="NF004016">
    <property type="entry name" value="PRK05478.1"/>
    <property type="match status" value="1"/>
</dbReference>
<dbReference type="NCBIfam" id="NF009116">
    <property type="entry name" value="PRK12466.1"/>
    <property type="match status" value="1"/>
</dbReference>
<dbReference type="PANTHER" id="PTHR43822:SF9">
    <property type="entry name" value="3-ISOPROPYLMALATE DEHYDRATASE"/>
    <property type="match status" value="1"/>
</dbReference>
<dbReference type="PANTHER" id="PTHR43822">
    <property type="entry name" value="HOMOACONITASE, MITOCHONDRIAL-RELATED"/>
    <property type="match status" value="1"/>
</dbReference>
<dbReference type="Pfam" id="PF00330">
    <property type="entry name" value="Aconitase"/>
    <property type="match status" value="1"/>
</dbReference>
<dbReference type="PRINTS" id="PR00415">
    <property type="entry name" value="ACONITASE"/>
</dbReference>
<dbReference type="SUPFAM" id="SSF53732">
    <property type="entry name" value="Aconitase iron-sulfur domain"/>
    <property type="match status" value="1"/>
</dbReference>
<dbReference type="PROSITE" id="PS00450">
    <property type="entry name" value="ACONITASE_1"/>
    <property type="match status" value="1"/>
</dbReference>
<dbReference type="PROSITE" id="PS01244">
    <property type="entry name" value="ACONITASE_2"/>
    <property type="match status" value="1"/>
</dbReference>
<name>LEUC_NATPD</name>
<proteinExistence type="inferred from homology"/>
<organism>
    <name type="scientific">Natronomonas pharaonis (strain ATCC 35678 / DSM 2160 / CIP 103997 / JCM 8858 / NBRC 14720 / NCIMB 2260 / Gabara)</name>
    <name type="common">Halobacterium pharaonis</name>
    <dbReference type="NCBI Taxonomy" id="348780"/>
    <lineage>
        <taxon>Archaea</taxon>
        <taxon>Methanobacteriati</taxon>
        <taxon>Methanobacteriota</taxon>
        <taxon>Stenosarchaea group</taxon>
        <taxon>Halobacteria</taxon>
        <taxon>Halobacteriales</taxon>
        <taxon>Haloarculaceae</taxon>
        <taxon>Natronomonas</taxon>
    </lineage>
</organism>
<gene>
    <name evidence="1" type="primary">leuC</name>
    <name type="ordered locus">NP_2194A</name>
</gene>
<evidence type="ECO:0000255" key="1">
    <source>
        <dbReference type="HAMAP-Rule" id="MF_01026"/>
    </source>
</evidence>
<evidence type="ECO:0000256" key="2">
    <source>
        <dbReference type="SAM" id="MobiDB-lite"/>
    </source>
</evidence>
<accession>Q3IRQ4</accession>
<keyword id="KW-0004">4Fe-4S</keyword>
<keyword id="KW-0028">Amino-acid biosynthesis</keyword>
<keyword id="KW-0100">Branched-chain amino acid biosynthesis</keyword>
<keyword id="KW-0408">Iron</keyword>
<keyword id="KW-0411">Iron-sulfur</keyword>
<keyword id="KW-0432">Leucine biosynthesis</keyword>
<keyword id="KW-0456">Lyase</keyword>
<keyword id="KW-0479">Metal-binding</keyword>
<keyword id="KW-1185">Reference proteome</keyword>
<feature type="chain" id="PRO_0000076853" description="3-isopropylmalate dehydratase large subunit">
    <location>
        <begin position="1"/>
        <end position="474"/>
    </location>
</feature>
<feature type="region of interest" description="Disordered" evidence="2">
    <location>
        <begin position="293"/>
        <end position="313"/>
    </location>
</feature>
<feature type="binding site" evidence="1">
    <location>
        <position position="348"/>
    </location>
    <ligand>
        <name>[4Fe-4S] cluster</name>
        <dbReference type="ChEBI" id="CHEBI:49883"/>
    </ligand>
</feature>
<feature type="binding site" evidence="1">
    <location>
        <position position="408"/>
    </location>
    <ligand>
        <name>[4Fe-4S] cluster</name>
        <dbReference type="ChEBI" id="CHEBI:49883"/>
    </ligand>
</feature>
<feature type="binding site" evidence="1">
    <location>
        <position position="411"/>
    </location>
    <ligand>
        <name>[4Fe-4S] cluster</name>
        <dbReference type="ChEBI" id="CHEBI:49883"/>
    </ligand>
</feature>